<name>CAPSL_HUMAN</name>
<protein>
    <recommendedName>
        <fullName>Calcyphosin-like protein</fullName>
    </recommendedName>
</protein>
<organism>
    <name type="scientific">Homo sapiens</name>
    <name type="common">Human</name>
    <dbReference type="NCBI Taxonomy" id="9606"/>
    <lineage>
        <taxon>Eukaryota</taxon>
        <taxon>Metazoa</taxon>
        <taxon>Chordata</taxon>
        <taxon>Craniata</taxon>
        <taxon>Vertebrata</taxon>
        <taxon>Euteleostomi</taxon>
        <taxon>Mammalia</taxon>
        <taxon>Eutheria</taxon>
        <taxon>Euarchontoglires</taxon>
        <taxon>Primates</taxon>
        <taxon>Haplorrhini</taxon>
        <taxon>Catarrhini</taxon>
        <taxon>Hominidae</taxon>
        <taxon>Homo</taxon>
    </lineage>
</organism>
<keyword id="KW-0106">Calcium</keyword>
<keyword id="KW-0963">Cytoplasm</keyword>
<keyword id="KW-0479">Metal-binding</keyword>
<keyword id="KW-1267">Proteomics identification</keyword>
<keyword id="KW-1185">Reference proteome</keyword>
<keyword id="KW-0677">Repeat</keyword>
<gene>
    <name type="primary">CAPSL</name>
</gene>
<comment type="subcellular location">
    <subcellularLocation>
        <location evidence="2">Cytoplasm</location>
    </subcellularLocation>
</comment>
<comment type="sequence caution" evidence="2">
    <conflict type="erroneous initiation">
        <sequence resource="EMBL-CDS" id="AAH17586"/>
    </conflict>
    <text>Truncated N-terminus.</text>
</comment>
<accession>Q8WWF8</accession>
<evidence type="ECO:0000255" key="1">
    <source>
        <dbReference type="PROSITE-ProRule" id="PRU00448"/>
    </source>
</evidence>
<evidence type="ECO:0000305" key="2"/>
<reference key="1">
    <citation type="journal article" date="2004" name="Nature">
        <title>The DNA sequence and comparative analysis of human chromosome 5.</title>
        <authorList>
            <person name="Schmutz J."/>
            <person name="Martin J."/>
            <person name="Terry A."/>
            <person name="Couronne O."/>
            <person name="Grimwood J."/>
            <person name="Lowry S."/>
            <person name="Gordon L.A."/>
            <person name="Scott D."/>
            <person name="Xie G."/>
            <person name="Huang W."/>
            <person name="Hellsten U."/>
            <person name="Tran-Gyamfi M."/>
            <person name="She X."/>
            <person name="Prabhakar S."/>
            <person name="Aerts A."/>
            <person name="Altherr M."/>
            <person name="Bajorek E."/>
            <person name="Black S."/>
            <person name="Branscomb E."/>
            <person name="Caoile C."/>
            <person name="Challacombe J.F."/>
            <person name="Chan Y.M."/>
            <person name="Denys M."/>
            <person name="Detter J.C."/>
            <person name="Escobar J."/>
            <person name="Flowers D."/>
            <person name="Fotopulos D."/>
            <person name="Glavina T."/>
            <person name="Gomez M."/>
            <person name="Gonzales E."/>
            <person name="Goodstein D."/>
            <person name="Grigoriev I."/>
            <person name="Groza M."/>
            <person name="Hammon N."/>
            <person name="Hawkins T."/>
            <person name="Haydu L."/>
            <person name="Israni S."/>
            <person name="Jett J."/>
            <person name="Kadner K."/>
            <person name="Kimball H."/>
            <person name="Kobayashi A."/>
            <person name="Lopez F."/>
            <person name="Lou Y."/>
            <person name="Martinez D."/>
            <person name="Medina C."/>
            <person name="Morgan J."/>
            <person name="Nandkeshwar R."/>
            <person name="Noonan J.P."/>
            <person name="Pitluck S."/>
            <person name="Pollard M."/>
            <person name="Predki P."/>
            <person name="Priest J."/>
            <person name="Ramirez L."/>
            <person name="Retterer J."/>
            <person name="Rodriguez A."/>
            <person name="Rogers S."/>
            <person name="Salamov A."/>
            <person name="Salazar A."/>
            <person name="Thayer N."/>
            <person name="Tice H."/>
            <person name="Tsai M."/>
            <person name="Ustaszewska A."/>
            <person name="Vo N."/>
            <person name="Wheeler J."/>
            <person name="Wu K."/>
            <person name="Yang J."/>
            <person name="Dickson M."/>
            <person name="Cheng J.-F."/>
            <person name="Eichler E.E."/>
            <person name="Olsen A."/>
            <person name="Pennacchio L.A."/>
            <person name="Rokhsar D.S."/>
            <person name="Richardson P."/>
            <person name="Lucas S.M."/>
            <person name="Myers R.M."/>
            <person name="Rubin E.M."/>
        </authorList>
    </citation>
    <scope>NUCLEOTIDE SEQUENCE [LARGE SCALE GENOMIC DNA]</scope>
</reference>
<reference key="2">
    <citation type="journal article" date="2004" name="Genome Res.">
        <title>The status, quality, and expansion of the NIH full-length cDNA project: the Mammalian Gene Collection (MGC).</title>
        <authorList>
            <consortium name="The MGC Project Team"/>
        </authorList>
    </citation>
    <scope>NUCLEOTIDE SEQUENCE [LARGE SCALE MRNA]</scope>
    <source>
        <tissue>Testis</tissue>
    </source>
</reference>
<sequence>MAGTARHDREMAIQAKKKLTTATDPIERLRLQCLARGSAGIKGLGRVFRIMDDDNNRTLDFKEFMKGLNDYAVVMEKEEVEELFRRFDKDGNGTIDFNEFLLTLRPPMSRARKEVIMQAFRKLDKTGDGVITIEDLREVYNAKHHPKYQNGEWSEEQVFRKFLDNFDSPYDKDGLVTPEEFMNYYAGVSASIDTDVYFIIMMRTAWKL</sequence>
<dbReference type="EMBL" id="AC112204">
    <property type="status" value="NOT_ANNOTATED_CDS"/>
    <property type="molecule type" value="Genomic_DNA"/>
</dbReference>
<dbReference type="EMBL" id="BC017586">
    <property type="protein sequence ID" value="AAH17586.2"/>
    <property type="status" value="ALT_INIT"/>
    <property type="molecule type" value="mRNA"/>
</dbReference>
<dbReference type="CCDS" id="CCDS3912.2"/>
<dbReference type="RefSeq" id="NP_001036090.1">
    <property type="nucleotide sequence ID" value="NM_001042625.2"/>
</dbReference>
<dbReference type="RefSeq" id="NP_653248.3">
    <property type="nucleotide sequence ID" value="NM_144647.3"/>
</dbReference>
<dbReference type="SMR" id="Q8WWF8"/>
<dbReference type="BioGRID" id="126371">
    <property type="interactions" value="15"/>
</dbReference>
<dbReference type="FunCoup" id="Q8WWF8">
    <property type="interactions" value="1"/>
</dbReference>
<dbReference type="IntAct" id="Q8WWF8">
    <property type="interactions" value="11"/>
</dbReference>
<dbReference type="STRING" id="9606.ENSP00000380524"/>
<dbReference type="iPTMnet" id="Q8WWF8"/>
<dbReference type="MetOSite" id="Q8WWF8"/>
<dbReference type="PhosphoSitePlus" id="Q8WWF8"/>
<dbReference type="BioMuta" id="CAPSL"/>
<dbReference type="DMDM" id="296439463"/>
<dbReference type="jPOST" id="Q8WWF8"/>
<dbReference type="MassIVE" id="Q8WWF8"/>
<dbReference type="PaxDb" id="9606-ENSP00000380524"/>
<dbReference type="PeptideAtlas" id="Q8WWF8"/>
<dbReference type="ProteomicsDB" id="74883"/>
<dbReference type="Antibodypedia" id="43514">
    <property type="antibodies" value="41 antibodies from 18 providers"/>
</dbReference>
<dbReference type="DNASU" id="133690"/>
<dbReference type="Ensembl" id="ENST00000397366.5">
    <property type="protein sequence ID" value="ENSP00000380523.1"/>
    <property type="gene ID" value="ENSG00000152611.12"/>
</dbReference>
<dbReference type="Ensembl" id="ENST00000397367.6">
    <property type="protein sequence ID" value="ENSP00000380524.2"/>
    <property type="gene ID" value="ENSG00000152611.12"/>
</dbReference>
<dbReference type="Ensembl" id="ENST00000651391.1">
    <property type="protein sequence ID" value="ENSP00000498465.1"/>
    <property type="gene ID" value="ENSG00000152611.12"/>
</dbReference>
<dbReference type="GeneID" id="133690"/>
<dbReference type="KEGG" id="hsa:133690"/>
<dbReference type="MANE-Select" id="ENST00000651391.1">
    <property type="protein sequence ID" value="ENSP00000498465.1"/>
    <property type="RefSeq nucleotide sequence ID" value="NM_001042625.2"/>
    <property type="RefSeq protein sequence ID" value="NP_001036090.1"/>
</dbReference>
<dbReference type="UCSC" id="uc003jjt.2">
    <property type="organism name" value="human"/>
</dbReference>
<dbReference type="AGR" id="HGNC:28375"/>
<dbReference type="CTD" id="133690"/>
<dbReference type="DisGeNET" id="133690"/>
<dbReference type="GeneCards" id="CAPSL"/>
<dbReference type="HGNC" id="HGNC:28375">
    <property type="gene designation" value="CAPSL"/>
</dbReference>
<dbReference type="HPA" id="ENSG00000152611">
    <property type="expression patterns" value="Group enriched (choroid plexus, fallopian tube)"/>
</dbReference>
<dbReference type="MIM" id="618799">
    <property type="type" value="gene"/>
</dbReference>
<dbReference type="neXtProt" id="NX_Q8WWF8"/>
<dbReference type="OpenTargets" id="ENSG00000152611"/>
<dbReference type="PharmGKB" id="PA142672204"/>
<dbReference type="VEuPathDB" id="HostDB:ENSG00000152611"/>
<dbReference type="eggNOG" id="KOG0032">
    <property type="taxonomic scope" value="Eukaryota"/>
</dbReference>
<dbReference type="GeneTree" id="ENSGT00940000156466"/>
<dbReference type="HOGENOM" id="CLU_036726_1_0_1"/>
<dbReference type="InParanoid" id="Q8WWF8"/>
<dbReference type="OMA" id="MKGVYHA"/>
<dbReference type="OrthoDB" id="444540at2759"/>
<dbReference type="PAN-GO" id="Q8WWF8">
    <property type="GO annotations" value="0 GO annotations based on evolutionary models"/>
</dbReference>
<dbReference type="PhylomeDB" id="Q8WWF8"/>
<dbReference type="TreeFam" id="TF318191"/>
<dbReference type="PathwayCommons" id="Q8WWF8"/>
<dbReference type="SignaLink" id="Q8WWF8"/>
<dbReference type="BioGRID-ORCS" id="133690">
    <property type="hits" value="13 hits in 1132 CRISPR screens"/>
</dbReference>
<dbReference type="GenomeRNAi" id="133690"/>
<dbReference type="Pharos" id="Q8WWF8">
    <property type="development level" value="Tdark"/>
</dbReference>
<dbReference type="PRO" id="PR:Q8WWF8"/>
<dbReference type="Proteomes" id="UP000005640">
    <property type="component" value="Chromosome 5"/>
</dbReference>
<dbReference type="RNAct" id="Q8WWF8">
    <property type="molecule type" value="protein"/>
</dbReference>
<dbReference type="Bgee" id="ENSG00000152611">
    <property type="expression patterns" value="Expressed in bronchial epithelial cell and 95 other cell types or tissues"/>
</dbReference>
<dbReference type="ExpressionAtlas" id="Q8WWF8">
    <property type="expression patterns" value="baseline and differential"/>
</dbReference>
<dbReference type="GO" id="GO:0005737">
    <property type="term" value="C:cytoplasm"/>
    <property type="evidence" value="ECO:0007669"/>
    <property type="project" value="UniProtKB-SubCell"/>
</dbReference>
<dbReference type="GO" id="GO:0005509">
    <property type="term" value="F:calcium ion binding"/>
    <property type="evidence" value="ECO:0007669"/>
    <property type="project" value="InterPro"/>
</dbReference>
<dbReference type="FunFam" id="1.10.238.10:FF:000178">
    <property type="entry name" value="Calmodulin-2 A"/>
    <property type="match status" value="1"/>
</dbReference>
<dbReference type="Gene3D" id="1.10.238.10">
    <property type="entry name" value="EF-hand"/>
    <property type="match status" value="2"/>
</dbReference>
<dbReference type="InterPro" id="IPR051581">
    <property type="entry name" value="Ca-bind_SignalingProt"/>
</dbReference>
<dbReference type="InterPro" id="IPR011992">
    <property type="entry name" value="EF-hand-dom_pair"/>
</dbReference>
<dbReference type="InterPro" id="IPR018247">
    <property type="entry name" value="EF_Hand_1_Ca_BS"/>
</dbReference>
<dbReference type="InterPro" id="IPR002048">
    <property type="entry name" value="EF_hand_dom"/>
</dbReference>
<dbReference type="PANTHER" id="PTHR34524">
    <property type="entry name" value="CALCYPHOSIN"/>
    <property type="match status" value="1"/>
</dbReference>
<dbReference type="PANTHER" id="PTHR34524:SF5">
    <property type="entry name" value="CALCYPHOSIN-LIKE PROTEIN"/>
    <property type="match status" value="1"/>
</dbReference>
<dbReference type="Pfam" id="PF13499">
    <property type="entry name" value="EF-hand_7"/>
    <property type="match status" value="2"/>
</dbReference>
<dbReference type="PRINTS" id="PR00450">
    <property type="entry name" value="RECOVERIN"/>
</dbReference>
<dbReference type="SMART" id="SM00054">
    <property type="entry name" value="EFh"/>
    <property type="match status" value="4"/>
</dbReference>
<dbReference type="SUPFAM" id="SSF47473">
    <property type="entry name" value="EF-hand"/>
    <property type="match status" value="1"/>
</dbReference>
<dbReference type="PROSITE" id="PS00018">
    <property type="entry name" value="EF_HAND_1"/>
    <property type="match status" value="2"/>
</dbReference>
<dbReference type="PROSITE" id="PS50222">
    <property type="entry name" value="EF_HAND_2"/>
    <property type="match status" value="4"/>
</dbReference>
<proteinExistence type="evidence at protein level"/>
<feature type="chain" id="PRO_0000264473" description="Calcyphosin-like protein">
    <location>
        <begin position="1"/>
        <end position="208"/>
    </location>
</feature>
<feature type="domain" description="EF-hand 1" evidence="1">
    <location>
        <begin position="39"/>
        <end position="74"/>
    </location>
</feature>
<feature type="domain" description="EF-hand 2" evidence="1">
    <location>
        <begin position="75"/>
        <end position="110"/>
    </location>
</feature>
<feature type="domain" description="EF-hand 3" evidence="1">
    <location>
        <begin position="111"/>
        <end position="146"/>
    </location>
</feature>
<feature type="domain" description="EF-hand 4" evidence="1">
    <location>
        <begin position="154"/>
        <end position="191"/>
    </location>
</feature>
<feature type="binding site" evidence="1">
    <location>
        <position position="52"/>
    </location>
    <ligand>
        <name>Ca(2+)</name>
        <dbReference type="ChEBI" id="CHEBI:29108"/>
        <label>1</label>
    </ligand>
</feature>
<feature type="binding site" evidence="1">
    <location>
        <position position="54"/>
    </location>
    <ligand>
        <name>Ca(2+)</name>
        <dbReference type="ChEBI" id="CHEBI:29108"/>
        <label>1</label>
    </ligand>
</feature>
<feature type="binding site" evidence="1">
    <location>
        <position position="56"/>
    </location>
    <ligand>
        <name>Ca(2+)</name>
        <dbReference type="ChEBI" id="CHEBI:29108"/>
        <label>1</label>
    </ligand>
</feature>
<feature type="binding site" evidence="1">
    <location>
        <position position="58"/>
    </location>
    <ligand>
        <name>Ca(2+)</name>
        <dbReference type="ChEBI" id="CHEBI:29108"/>
        <label>1</label>
    </ligand>
</feature>
<feature type="binding site" evidence="1">
    <location>
        <position position="63"/>
    </location>
    <ligand>
        <name>Ca(2+)</name>
        <dbReference type="ChEBI" id="CHEBI:29108"/>
        <label>1</label>
    </ligand>
</feature>
<feature type="binding site" evidence="1">
    <location>
        <position position="88"/>
    </location>
    <ligand>
        <name>Ca(2+)</name>
        <dbReference type="ChEBI" id="CHEBI:29108"/>
        <label>2</label>
    </ligand>
</feature>
<feature type="binding site" evidence="1">
    <location>
        <position position="90"/>
    </location>
    <ligand>
        <name>Ca(2+)</name>
        <dbReference type="ChEBI" id="CHEBI:29108"/>
        <label>2</label>
    </ligand>
</feature>
<feature type="binding site" evidence="1">
    <location>
        <position position="92"/>
    </location>
    <ligand>
        <name>Ca(2+)</name>
        <dbReference type="ChEBI" id="CHEBI:29108"/>
        <label>2</label>
    </ligand>
</feature>
<feature type="binding site" evidence="1">
    <location>
        <position position="94"/>
    </location>
    <ligand>
        <name>Ca(2+)</name>
        <dbReference type="ChEBI" id="CHEBI:29108"/>
        <label>2</label>
    </ligand>
</feature>
<feature type="binding site" evidence="1">
    <location>
        <position position="99"/>
    </location>
    <ligand>
        <name>Ca(2+)</name>
        <dbReference type="ChEBI" id="CHEBI:29108"/>
        <label>2</label>
    </ligand>
</feature>
<feature type="sequence variant" id="VAR_029631" description="In dbSNP:rs1445898.">
    <original>R</original>
    <variation>Q</variation>
    <location>
        <position position="85"/>
    </location>
</feature>
<feature type="sequence variant" id="VAR_029632" description="In dbSNP:rs1345826.">
    <original>M</original>
    <variation>V</variation>
    <location>
        <position position="201"/>
    </location>
</feature>
<feature type="sequence conflict" description="In Ref. 2; AAH17586." evidence="2" ref="2">
    <original>D</original>
    <variation>N</variation>
    <location>
        <position position="24"/>
    </location>
</feature>